<dbReference type="EC" id="1.1.98.2" evidence="1"/>
<dbReference type="EMBL" id="CP000434">
    <property type="protein sequence ID" value="ABH00709.1"/>
    <property type="molecule type" value="Genomic_DNA"/>
</dbReference>
<dbReference type="RefSeq" id="WP_011600337.1">
    <property type="nucleotide sequence ID" value="NC_008271.1"/>
</dbReference>
<dbReference type="PDB" id="5LXE">
    <property type="method" value="X-ray"/>
    <property type="resolution" value="1.47 A"/>
    <property type="chains" value="A/B=1-335"/>
</dbReference>
<dbReference type="PDBsum" id="5LXE"/>
<dbReference type="SMR" id="Q0RVH7"/>
<dbReference type="KEGG" id="rha:RHA1_ro11062"/>
<dbReference type="PATRIC" id="fig|101510.16.peg.8893"/>
<dbReference type="eggNOG" id="COG2141">
    <property type="taxonomic scope" value="Bacteria"/>
</dbReference>
<dbReference type="HOGENOM" id="CLU_027853_4_0_11"/>
<dbReference type="OrthoDB" id="180193at2"/>
<dbReference type="BRENDA" id="1.1.98.2">
    <property type="organism ID" value="3445"/>
</dbReference>
<dbReference type="Proteomes" id="UP000008710">
    <property type="component" value="Plasmid pRHL3"/>
</dbReference>
<dbReference type="GO" id="GO:0070967">
    <property type="term" value="F:coenzyme F420 binding"/>
    <property type="evidence" value="ECO:0007669"/>
    <property type="project" value="UniProtKB-UniRule"/>
</dbReference>
<dbReference type="GO" id="GO:0052749">
    <property type="term" value="F:glucose-6-phosphate dehydrogenase (coenzyme F420) activity"/>
    <property type="evidence" value="ECO:0007669"/>
    <property type="project" value="UniProtKB-EC"/>
</dbReference>
<dbReference type="GO" id="GO:0016705">
    <property type="term" value="F:oxidoreductase activity, acting on paired donors, with incorporation or reduction of molecular oxygen"/>
    <property type="evidence" value="ECO:0007669"/>
    <property type="project" value="InterPro"/>
</dbReference>
<dbReference type="GO" id="GO:0005975">
    <property type="term" value="P:carbohydrate metabolic process"/>
    <property type="evidence" value="ECO:0007669"/>
    <property type="project" value="UniProtKB-UniRule"/>
</dbReference>
<dbReference type="CDD" id="cd01097">
    <property type="entry name" value="Tetrahydromethanopterin_reductase"/>
    <property type="match status" value="1"/>
</dbReference>
<dbReference type="Gene3D" id="3.20.20.30">
    <property type="entry name" value="Luciferase-like domain"/>
    <property type="match status" value="1"/>
</dbReference>
<dbReference type="HAMAP" id="MF_02123">
    <property type="entry name" value="F420_G6P_DH"/>
    <property type="match status" value="1"/>
</dbReference>
<dbReference type="InterPro" id="IPR019944">
    <property type="entry name" value="F420-dep_G6P_DH"/>
</dbReference>
<dbReference type="InterPro" id="IPR050564">
    <property type="entry name" value="F420-G6PD/mer"/>
</dbReference>
<dbReference type="InterPro" id="IPR019945">
    <property type="entry name" value="F420_G6P_DH-rel"/>
</dbReference>
<dbReference type="InterPro" id="IPR011251">
    <property type="entry name" value="Luciferase-like_dom"/>
</dbReference>
<dbReference type="InterPro" id="IPR036661">
    <property type="entry name" value="Luciferase-like_sf"/>
</dbReference>
<dbReference type="NCBIfam" id="TIGR03554">
    <property type="entry name" value="F420_G6P_DH"/>
    <property type="match status" value="1"/>
</dbReference>
<dbReference type="NCBIfam" id="TIGR03557">
    <property type="entry name" value="F420_G6P_family"/>
    <property type="match status" value="1"/>
</dbReference>
<dbReference type="PANTHER" id="PTHR43244">
    <property type="match status" value="1"/>
</dbReference>
<dbReference type="PANTHER" id="PTHR43244:SF1">
    <property type="entry name" value="5,10-METHYLENETETRAHYDROMETHANOPTERIN REDUCTASE"/>
    <property type="match status" value="1"/>
</dbReference>
<dbReference type="Pfam" id="PF00296">
    <property type="entry name" value="Bac_luciferase"/>
    <property type="match status" value="1"/>
</dbReference>
<dbReference type="SUPFAM" id="SSF51679">
    <property type="entry name" value="Bacterial luciferase-like"/>
    <property type="match status" value="1"/>
</dbReference>
<accession>Q0RVH7</accession>
<reference key="1">
    <citation type="journal article" date="2006" name="Proc. Natl. Acad. Sci. U.S.A.">
        <title>The complete genome of Rhodococcus sp. RHA1 provides insights into a catabolic powerhouse.</title>
        <authorList>
            <person name="McLeod M.P."/>
            <person name="Warren R.L."/>
            <person name="Hsiao W.W.L."/>
            <person name="Araki N."/>
            <person name="Myhre M."/>
            <person name="Fernandes C."/>
            <person name="Miyazawa D."/>
            <person name="Wong W."/>
            <person name="Lillquist A.L."/>
            <person name="Wang D."/>
            <person name="Dosanjh M."/>
            <person name="Hara H."/>
            <person name="Petrescu A."/>
            <person name="Morin R.D."/>
            <person name="Yang G."/>
            <person name="Stott J.M."/>
            <person name="Schein J.E."/>
            <person name="Shin H."/>
            <person name="Smailus D."/>
            <person name="Siddiqui A.S."/>
            <person name="Marra M.A."/>
            <person name="Jones S.J.M."/>
            <person name="Holt R."/>
            <person name="Brinkman F.S.L."/>
            <person name="Miyauchi K."/>
            <person name="Fukuda M."/>
            <person name="Davies J.E."/>
            <person name="Mohn W.W."/>
            <person name="Eltis L.D."/>
        </authorList>
    </citation>
    <scope>NUCLEOTIDE SEQUENCE [LARGE SCALE GENOMIC DNA]</scope>
    <source>
        <strain>RHA1</strain>
    </source>
</reference>
<proteinExistence type="evidence at protein level"/>
<organism>
    <name type="scientific">Rhodococcus jostii (strain RHA1)</name>
    <dbReference type="NCBI Taxonomy" id="101510"/>
    <lineage>
        <taxon>Bacteria</taxon>
        <taxon>Bacillati</taxon>
        <taxon>Actinomycetota</taxon>
        <taxon>Actinomycetes</taxon>
        <taxon>Mycobacteriales</taxon>
        <taxon>Nocardiaceae</taxon>
        <taxon>Rhodococcus</taxon>
    </lineage>
</organism>
<feature type="chain" id="PRO_0000413601" description="F420-dependent glucose-6-phosphate dehydrogenase 1">
    <location>
        <begin position="1"/>
        <end position="335"/>
    </location>
</feature>
<feature type="active site" description="Proton donor" evidence="1">
    <location>
        <position position="39"/>
    </location>
</feature>
<feature type="active site" description="Proton acceptor" evidence="1">
    <location>
        <position position="108"/>
    </location>
</feature>
<feature type="binding site" evidence="1">
    <location>
        <position position="38"/>
    </location>
    <ligand>
        <name>coenzyme F420-(gamma-Glu)n</name>
        <dbReference type="ChEBI" id="CHEBI:133980"/>
    </ligand>
</feature>
<feature type="binding site" evidence="1">
    <location>
        <position position="75"/>
    </location>
    <ligand>
        <name>coenzyme F420-(gamma-Glu)n</name>
        <dbReference type="ChEBI" id="CHEBI:133980"/>
    </ligand>
</feature>
<feature type="binding site" evidence="1">
    <location>
        <begin position="106"/>
        <end position="107"/>
    </location>
    <ligand>
        <name>coenzyme F420-(gamma-Glu)n</name>
        <dbReference type="ChEBI" id="CHEBI:133980"/>
    </ligand>
</feature>
<feature type="binding site" evidence="1">
    <location>
        <position position="111"/>
    </location>
    <ligand>
        <name>coenzyme F420-(gamma-Glu)n</name>
        <dbReference type="ChEBI" id="CHEBI:133980"/>
    </ligand>
</feature>
<feature type="binding site" evidence="1">
    <location>
        <begin position="176"/>
        <end position="177"/>
    </location>
    <ligand>
        <name>coenzyme F420-(gamma-Glu)n</name>
        <dbReference type="ChEBI" id="CHEBI:133980"/>
    </ligand>
</feature>
<feature type="binding site" evidence="1">
    <location>
        <begin position="179"/>
        <end position="180"/>
    </location>
    <ligand>
        <name>coenzyme F420-(gamma-Glu)n</name>
        <dbReference type="ChEBI" id="CHEBI:133980"/>
    </ligand>
</feature>
<feature type="binding site" evidence="1">
    <location>
        <position position="194"/>
    </location>
    <ligand>
        <name>substrate</name>
    </ligand>
</feature>
<feature type="binding site" evidence="1">
    <location>
        <position position="197"/>
    </location>
    <ligand>
        <name>substrate</name>
    </ligand>
</feature>
<feature type="binding site" evidence="1">
    <location>
        <position position="258"/>
    </location>
    <ligand>
        <name>substrate</name>
    </ligand>
</feature>
<feature type="binding site" evidence="1">
    <location>
        <position position="282"/>
    </location>
    <ligand>
        <name>substrate</name>
    </ligand>
</feature>
<feature type="strand" evidence="2">
    <location>
        <begin position="4"/>
        <end position="9"/>
    </location>
</feature>
<feature type="turn" evidence="2">
    <location>
        <begin position="11"/>
        <end position="13"/>
    </location>
</feature>
<feature type="helix" evidence="2">
    <location>
        <begin position="16"/>
        <end position="28"/>
    </location>
</feature>
<feature type="strand" evidence="2">
    <location>
        <begin position="32"/>
        <end position="36"/>
    </location>
</feature>
<feature type="helix" evidence="2">
    <location>
        <begin position="53"/>
        <end position="63"/>
    </location>
</feature>
<feature type="strand" evidence="2">
    <location>
        <begin position="68"/>
        <end position="72"/>
    </location>
</feature>
<feature type="strand" evidence="2">
    <location>
        <begin position="77"/>
        <end position="80"/>
    </location>
</feature>
<feature type="helix" evidence="2">
    <location>
        <begin position="82"/>
        <end position="95"/>
    </location>
</feature>
<feature type="strand" evidence="2">
    <location>
        <begin position="100"/>
        <end position="104"/>
    </location>
</feature>
<feature type="helix" evidence="2">
    <location>
        <begin position="109"/>
        <end position="114"/>
    </location>
</feature>
<feature type="helix" evidence="2">
    <location>
        <begin position="124"/>
        <end position="143"/>
    </location>
</feature>
<feature type="strand" evidence="2">
    <location>
        <begin position="145"/>
        <end position="150"/>
    </location>
</feature>
<feature type="strand" evidence="2">
    <location>
        <begin position="155"/>
        <end position="159"/>
    </location>
</feature>
<feature type="strand" evidence="2">
    <location>
        <begin position="171"/>
        <end position="174"/>
    </location>
</feature>
<feature type="helix" evidence="2">
    <location>
        <begin position="178"/>
        <end position="187"/>
    </location>
</feature>
<feature type="strand" evidence="2">
    <location>
        <begin position="189"/>
        <end position="197"/>
    </location>
</feature>
<feature type="helix" evidence="2">
    <location>
        <begin position="200"/>
        <end position="204"/>
    </location>
</feature>
<feature type="helix" evidence="2">
    <location>
        <begin position="206"/>
        <end position="216"/>
    </location>
</feature>
<feature type="helix" evidence="2">
    <location>
        <begin position="221"/>
        <end position="223"/>
    </location>
</feature>
<feature type="strand" evidence="2">
    <location>
        <begin position="224"/>
        <end position="234"/>
    </location>
</feature>
<feature type="helix" evidence="2">
    <location>
        <begin position="238"/>
        <end position="243"/>
    </location>
</feature>
<feature type="helix" evidence="2">
    <location>
        <begin position="244"/>
        <end position="252"/>
    </location>
</feature>
<feature type="helix" evidence="2">
    <location>
        <begin position="265"/>
        <end position="273"/>
    </location>
</feature>
<feature type="helix" evidence="2">
    <location>
        <begin position="276"/>
        <end position="279"/>
    </location>
</feature>
<feature type="turn" evidence="2">
    <location>
        <begin position="280"/>
        <end position="282"/>
    </location>
</feature>
<feature type="strand" evidence="2">
    <location>
        <begin position="283"/>
        <end position="288"/>
    </location>
</feature>
<feature type="helix" evidence="2">
    <location>
        <begin position="289"/>
        <end position="301"/>
    </location>
</feature>
<feature type="strand" evidence="2">
    <location>
        <begin position="306"/>
        <end position="310"/>
    </location>
</feature>
<feature type="helix" evidence="2">
    <location>
        <begin position="316"/>
        <end position="326"/>
    </location>
</feature>
<feature type="helix" evidence="2">
    <location>
        <begin position="328"/>
        <end position="332"/>
    </location>
</feature>
<name>FGD1_RHOJR</name>
<protein>
    <recommendedName>
        <fullName evidence="1">F420-dependent glucose-6-phosphate dehydrogenase 1</fullName>
        <shortName evidence="1">FGD 1</shortName>
        <shortName evidence="1">G6PD 1</shortName>
        <ecNumber evidence="1">1.1.98.2</ecNumber>
    </recommendedName>
</protein>
<evidence type="ECO:0000255" key="1">
    <source>
        <dbReference type="HAMAP-Rule" id="MF_02123"/>
    </source>
</evidence>
<evidence type="ECO:0007829" key="2">
    <source>
        <dbReference type="PDB" id="5LXE"/>
    </source>
</evidence>
<keyword id="KW-0002">3D-structure</keyword>
<keyword id="KW-0119">Carbohydrate metabolism</keyword>
<keyword id="KW-0560">Oxidoreductase</keyword>
<keyword id="KW-0614">Plasmid</keyword>
<gene>
    <name evidence="1" type="primary">fgd1</name>
    <name type="ordered locus">RHA1_ro11062</name>
</gene>
<sequence>MVIKFGYKASAEQFGPRELVELGVLAEAHGMDSATVSDHFQPWRHEGGHAPFSLAWMTAVGERTSRLQLGTSVMTPTFRYNPAVVAQAFATMGCLYPGRIMLGVGTGEALNEIATGFAGEWPEFKERFARLREAVALMRELWLGDRVDFEGNYYKTVGASIYDVPEGGIPVYIAAGGPVVARYAGRSGDGFICTSGKGMELYTEKLMPAVAEGAEKADRDVAEIDKMIEIKISYDTDPELALENTRFWAPLSLTPEQKHSIDDPIEMERAADALPIEQVAKRWIVASDPDEAVAQIRPYLDAGLNHLVFHAPGHDQKRFLELFQRDLAPRLRGLA</sequence>
<geneLocation type="plasmid">
    <name>pRHL3</name>
</geneLocation>
<comment type="function">
    <text evidence="1">Catalyzes the coenzyme F420-dependent oxidation of glucose 6-phosphate (G6P) to 6-phosphogluconolactone.</text>
</comment>
<comment type="catalytic activity">
    <reaction evidence="1">
        <text>oxidized coenzyme F420-(gamma-L-Glu)(n) + D-glucose 6-phosphate + H(+) = 6-phospho-D-glucono-1,5-lactone + reduced coenzyme F420-(gamma-L-Glu)(n)</text>
        <dbReference type="Rhea" id="RHEA:27294"/>
        <dbReference type="Rhea" id="RHEA-COMP:12939"/>
        <dbReference type="Rhea" id="RHEA-COMP:14378"/>
        <dbReference type="ChEBI" id="CHEBI:15378"/>
        <dbReference type="ChEBI" id="CHEBI:57955"/>
        <dbReference type="ChEBI" id="CHEBI:61548"/>
        <dbReference type="ChEBI" id="CHEBI:133980"/>
        <dbReference type="ChEBI" id="CHEBI:139511"/>
        <dbReference type="EC" id="1.1.98.2"/>
    </reaction>
</comment>
<comment type="subunit">
    <text evidence="1">Homodimer.</text>
</comment>
<comment type="similarity">
    <text evidence="1">Belongs to the F420-dependent glucose-6-phosphate dehydrogenase family.</text>
</comment>